<protein>
    <recommendedName>
        <fullName evidence="1">Chaperone SurA</fullName>
    </recommendedName>
    <alternativeName>
        <fullName evidence="1">Peptidyl-prolyl cis-trans isomerase SurA</fullName>
        <shortName evidence="1">PPIase SurA</shortName>
        <ecNumber evidence="1">5.2.1.8</ecNumber>
    </alternativeName>
    <alternativeName>
        <fullName evidence="1">Rotamase SurA</fullName>
    </alternativeName>
</protein>
<sequence length="448" mass="48799">MKKTLRFAAVAAGLVASLITVAPSASAQALRAQGASLADEVVAVVNNDVITGRELDQRVGLIARRLQQQKAPVPPTDQLRAQVLNQMVLERIQVQRAKDDGIVVDNATVQATLGRLAQANGMPLDQYKARIEAQGVPWDLFVRDARTELMLSKLREKEVDSKITVSDAEVASYIASQRGPNAGAQQDLRLEHIFVKAPTNAPQADIDAAQKKAEGLLQQALASGTNFERLAKSQSEADDAKKGGDLGFKAPSSLPSDVVDAVSKLRPGEVNPTLIRVPDGFEIVRLVDRRASQNPAASPKIVQTHVRHILLRVGEGKSESQARQQLIDIRRQIEAGGDFEKFARTYSQDGSASQGGDLGWISPGETVPEFERAMNALQDGQVSNPVRTEYGYHLIQVLGRRDAEGSVQQQMDIARQAIGQRKAEQAYSDWLRELRDSSYVQIKLPVGQ</sequence>
<proteinExistence type="inferred from homology"/>
<gene>
    <name evidence="1" type="primary">surA</name>
    <name type="ordered locus">BTH_I0576</name>
</gene>
<organism>
    <name type="scientific">Burkholderia thailandensis (strain ATCC 700388 / DSM 13276 / CCUG 48851 / CIP 106301 / E264)</name>
    <dbReference type="NCBI Taxonomy" id="271848"/>
    <lineage>
        <taxon>Bacteria</taxon>
        <taxon>Pseudomonadati</taxon>
        <taxon>Pseudomonadota</taxon>
        <taxon>Betaproteobacteria</taxon>
        <taxon>Burkholderiales</taxon>
        <taxon>Burkholderiaceae</taxon>
        <taxon>Burkholderia</taxon>
        <taxon>pseudomallei group</taxon>
    </lineage>
</organism>
<evidence type="ECO:0000255" key="1">
    <source>
        <dbReference type="HAMAP-Rule" id="MF_01183"/>
    </source>
</evidence>
<evidence type="ECO:0000256" key="2">
    <source>
        <dbReference type="SAM" id="MobiDB-lite"/>
    </source>
</evidence>
<accession>Q2T116</accession>
<keyword id="KW-0143">Chaperone</keyword>
<keyword id="KW-0413">Isomerase</keyword>
<keyword id="KW-0574">Periplasm</keyword>
<keyword id="KW-0677">Repeat</keyword>
<keyword id="KW-0697">Rotamase</keyword>
<keyword id="KW-0732">Signal</keyword>
<name>SURA_BURTA</name>
<feature type="signal peptide" evidence="1">
    <location>
        <begin position="1"/>
        <end position="27"/>
    </location>
</feature>
<feature type="chain" id="PRO_0000270009" description="Chaperone SurA">
    <location>
        <begin position="28"/>
        <end position="448"/>
    </location>
</feature>
<feature type="domain" description="PpiC 1" evidence="1">
    <location>
        <begin position="185"/>
        <end position="288"/>
    </location>
</feature>
<feature type="domain" description="PpiC 2" evidence="1">
    <location>
        <begin position="301"/>
        <end position="399"/>
    </location>
</feature>
<feature type="region of interest" description="Disordered" evidence="2">
    <location>
        <begin position="230"/>
        <end position="249"/>
    </location>
</feature>
<comment type="function">
    <text evidence="1">Chaperone involved in the correct folding and assembly of outer membrane proteins. Recognizes specific patterns of aromatic residues and the orientation of their side chains, which are found more frequently in integral outer membrane proteins. May act in both early periplasmic and late outer membrane-associated steps of protein maturation.</text>
</comment>
<comment type="catalytic activity">
    <reaction evidence="1">
        <text>[protein]-peptidylproline (omega=180) = [protein]-peptidylproline (omega=0)</text>
        <dbReference type="Rhea" id="RHEA:16237"/>
        <dbReference type="Rhea" id="RHEA-COMP:10747"/>
        <dbReference type="Rhea" id="RHEA-COMP:10748"/>
        <dbReference type="ChEBI" id="CHEBI:83833"/>
        <dbReference type="ChEBI" id="CHEBI:83834"/>
        <dbReference type="EC" id="5.2.1.8"/>
    </reaction>
</comment>
<comment type="subcellular location">
    <subcellularLocation>
        <location evidence="1">Periplasm</location>
    </subcellularLocation>
    <text evidence="1">Is capable of associating with the outer membrane.</text>
</comment>
<comment type="domain">
    <text evidence="1">The PPIase activity resides only in the second parvulin domain. The N-terminal region and the C-terminal tail are necessary and sufficient for the chaperone activity of SurA. The PPIase activity is dispensable for SurA to function as a chaperone. The N-terminal region and the C-terminal tail are also required for porin recognition.</text>
</comment>
<dbReference type="EC" id="5.2.1.8" evidence="1"/>
<dbReference type="EMBL" id="CP000086">
    <property type="protein sequence ID" value="ABC38226.1"/>
    <property type="molecule type" value="Genomic_DNA"/>
</dbReference>
<dbReference type="RefSeq" id="WP_009892911.1">
    <property type="nucleotide sequence ID" value="NZ_CP008785.1"/>
</dbReference>
<dbReference type="SMR" id="Q2T116"/>
<dbReference type="GeneID" id="45120337"/>
<dbReference type="KEGG" id="bte:BTH_I0576"/>
<dbReference type="HOGENOM" id="CLU_034646_11_0_4"/>
<dbReference type="Proteomes" id="UP000001930">
    <property type="component" value="Chromosome I"/>
</dbReference>
<dbReference type="GO" id="GO:0030288">
    <property type="term" value="C:outer membrane-bounded periplasmic space"/>
    <property type="evidence" value="ECO:0007669"/>
    <property type="project" value="InterPro"/>
</dbReference>
<dbReference type="GO" id="GO:0042277">
    <property type="term" value="F:peptide binding"/>
    <property type="evidence" value="ECO:0007669"/>
    <property type="project" value="InterPro"/>
</dbReference>
<dbReference type="GO" id="GO:0003755">
    <property type="term" value="F:peptidyl-prolyl cis-trans isomerase activity"/>
    <property type="evidence" value="ECO:0007669"/>
    <property type="project" value="UniProtKB-UniRule"/>
</dbReference>
<dbReference type="GO" id="GO:0051082">
    <property type="term" value="F:unfolded protein binding"/>
    <property type="evidence" value="ECO:0007669"/>
    <property type="project" value="UniProtKB-UniRule"/>
</dbReference>
<dbReference type="GO" id="GO:0043165">
    <property type="term" value="P:Gram-negative-bacterium-type cell outer membrane assembly"/>
    <property type="evidence" value="ECO:0007669"/>
    <property type="project" value="InterPro"/>
</dbReference>
<dbReference type="GO" id="GO:0006457">
    <property type="term" value="P:protein folding"/>
    <property type="evidence" value="ECO:0007669"/>
    <property type="project" value="UniProtKB-UniRule"/>
</dbReference>
<dbReference type="GO" id="GO:0050821">
    <property type="term" value="P:protein stabilization"/>
    <property type="evidence" value="ECO:0007669"/>
    <property type="project" value="InterPro"/>
</dbReference>
<dbReference type="Gene3D" id="3.10.50.40">
    <property type="match status" value="2"/>
</dbReference>
<dbReference type="Gene3D" id="1.10.4030.10">
    <property type="entry name" value="Porin chaperone SurA, peptide-binding domain"/>
    <property type="match status" value="1"/>
</dbReference>
<dbReference type="HAMAP" id="MF_01183">
    <property type="entry name" value="Chaperone_SurA"/>
    <property type="match status" value="1"/>
</dbReference>
<dbReference type="InterPro" id="IPR050280">
    <property type="entry name" value="OMP_Chaperone_SurA"/>
</dbReference>
<dbReference type="InterPro" id="IPR046357">
    <property type="entry name" value="PPIase_dom_sf"/>
</dbReference>
<dbReference type="InterPro" id="IPR000297">
    <property type="entry name" value="PPIase_PpiC"/>
</dbReference>
<dbReference type="InterPro" id="IPR023034">
    <property type="entry name" value="PPIase_SurA"/>
</dbReference>
<dbReference type="InterPro" id="IPR015391">
    <property type="entry name" value="SurA_N"/>
</dbReference>
<dbReference type="InterPro" id="IPR027304">
    <property type="entry name" value="Trigger_fact/SurA_dom_sf"/>
</dbReference>
<dbReference type="PANTHER" id="PTHR47637">
    <property type="entry name" value="CHAPERONE SURA"/>
    <property type="match status" value="1"/>
</dbReference>
<dbReference type="PANTHER" id="PTHR47637:SF1">
    <property type="entry name" value="CHAPERONE SURA"/>
    <property type="match status" value="1"/>
</dbReference>
<dbReference type="Pfam" id="PF00639">
    <property type="entry name" value="Rotamase"/>
    <property type="match status" value="1"/>
</dbReference>
<dbReference type="Pfam" id="PF13616">
    <property type="entry name" value="Rotamase_3"/>
    <property type="match status" value="1"/>
</dbReference>
<dbReference type="Pfam" id="PF09312">
    <property type="entry name" value="SurA_N"/>
    <property type="match status" value="1"/>
</dbReference>
<dbReference type="SUPFAM" id="SSF54534">
    <property type="entry name" value="FKBP-like"/>
    <property type="match status" value="2"/>
</dbReference>
<dbReference type="SUPFAM" id="SSF109998">
    <property type="entry name" value="Triger factor/SurA peptide-binding domain-like"/>
    <property type="match status" value="1"/>
</dbReference>
<dbReference type="PROSITE" id="PS50198">
    <property type="entry name" value="PPIC_PPIASE_2"/>
    <property type="match status" value="2"/>
</dbReference>
<reference key="1">
    <citation type="journal article" date="2005" name="BMC Genomics">
        <title>Bacterial genome adaptation to niches: divergence of the potential virulence genes in three Burkholderia species of different survival strategies.</title>
        <authorList>
            <person name="Kim H.S."/>
            <person name="Schell M.A."/>
            <person name="Yu Y."/>
            <person name="Ulrich R.L."/>
            <person name="Sarria S.H."/>
            <person name="Nierman W.C."/>
            <person name="DeShazer D."/>
        </authorList>
    </citation>
    <scope>NUCLEOTIDE SEQUENCE [LARGE SCALE GENOMIC DNA]</scope>
    <source>
        <strain>ATCC 700388 / DSM 13276 / CCUG 48851 / CIP 106301 / E264</strain>
    </source>
</reference>